<protein>
    <recommendedName>
        <fullName evidence="1">Ribonuclease 3</fullName>
        <ecNumber evidence="1">3.1.26.3</ecNumber>
    </recommendedName>
    <alternativeName>
        <fullName evidence="1">Ribonuclease III</fullName>
        <shortName evidence="1">RNase III</shortName>
    </alternativeName>
</protein>
<sequence length="226" mass="25200">MIESISKIIKYNFKNPQLLNEALTHPSLVSKDTLKFNYERLEFLGDAVLNIVISEMLFNIFPKDTEGNLAKKKTALVCGNKLVEVAQSINLGQFIMMSDGERACGGINNFRNLENALEALIGAIYLDGGFTAAQDFIYLFWEHSATHMNVPPQDAKTILQELVQGKRLPAPAYHTIDKSGPDHNPTFTVEVRIPSYQAIQATGHNKKLAEQKAASLMLNQIHNKTK</sequence>
<evidence type="ECO:0000255" key="1">
    <source>
        <dbReference type="HAMAP-Rule" id="MF_00104"/>
    </source>
</evidence>
<feature type="chain" id="PRO_1000075751" description="Ribonuclease 3">
    <location>
        <begin position="1"/>
        <end position="226"/>
    </location>
</feature>
<feature type="domain" description="RNase III" evidence="1">
    <location>
        <begin position="2"/>
        <end position="129"/>
    </location>
</feature>
<feature type="domain" description="DRBM" evidence="1">
    <location>
        <begin position="154"/>
        <end position="223"/>
    </location>
</feature>
<feature type="active site" evidence="1">
    <location>
        <position position="46"/>
    </location>
</feature>
<feature type="active site" evidence="1">
    <location>
        <position position="118"/>
    </location>
</feature>
<feature type="binding site" evidence="1">
    <location>
        <position position="42"/>
    </location>
    <ligand>
        <name>Mg(2+)</name>
        <dbReference type="ChEBI" id="CHEBI:18420"/>
    </ligand>
</feature>
<feature type="binding site" evidence="1">
    <location>
        <position position="115"/>
    </location>
    <ligand>
        <name>Mg(2+)</name>
        <dbReference type="ChEBI" id="CHEBI:18420"/>
    </ligand>
</feature>
<feature type="binding site" evidence="1">
    <location>
        <position position="118"/>
    </location>
    <ligand>
        <name>Mg(2+)</name>
        <dbReference type="ChEBI" id="CHEBI:18420"/>
    </ligand>
</feature>
<dbReference type="EC" id="3.1.26.3" evidence="1"/>
<dbReference type="EMBL" id="CP000236">
    <property type="protein sequence ID" value="ABD44996.1"/>
    <property type="molecule type" value="Genomic_DNA"/>
</dbReference>
<dbReference type="RefSeq" id="WP_006011429.1">
    <property type="nucleotide sequence ID" value="NC_007799.1"/>
</dbReference>
<dbReference type="SMR" id="Q2GFE4"/>
<dbReference type="STRING" id="205920.ECH_1054"/>
<dbReference type="KEGG" id="ech:ECH_1054"/>
<dbReference type="eggNOG" id="COG0571">
    <property type="taxonomic scope" value="Bacteria"/>
</dbReference>
<dbReference type="HOGENOM" id="CLU_000907_1_1_5"/>
<dbReference type="OrthoDB" id="9805026at2"/>
<dbReference type="Proteomes" id="UP000008320">
    <property type="component" value="Chromosome"/>
</dbReference>
<dbReference type="GO" id="GO:0005737">
    <property type="term" value="C:cytoplasm"/>
    <property type="evidence" value="ECO:0007669"/>
    <property type="project" value="UniProtKB-SubCell"/>
</dbReference>
<dbReference type="GO" id="GO:0003725">
    <property type="term" value="F:double-stranded RNA binding"/>
    <property type="evidence" value="ECO:0007669"/>
    <property type="project" value="TreeGrafter"/>
</dbReference>
<dbReference type="GO" id="GO:0046872">
    <property type="term" value="F:metal ion binding"/>
    <property type="evidence" value="ECO:0007669"/>
    <property type="project" value="UniProtKB-KW"/>
</dbReference>
<dbReference type="GO" id="GO:0004525">
    <property type="term" value="F:ribonuclease III activity"/>
    <property type="evidence" value="ECO:0007669"/>
    <property type="project" value="UniProtKB-UniRule"/>
</dbReference>
<dbReference type="GO" id="GO:0019843">
    <property type="term" value="F:rRNA binding"/>
    <property type="evidence" value="ECO:0007669"/>
    <property type="project" value="UniProtKB-KW"/>
</dbReference>
<dbReference type="GO" id="GO:0006397">
    <property type="term" value="P:mRNA processing"/>
    <property type="evidence" value="ECO:0007669"/>
    <property type="project" value="UniProtKB-UniRule"/>
</dbReference>
<dbReference type="GO" id="GO:0010468">
    <property type="term" value="P:regulation of gene expression"/>
    <property type="evidence" value="ECO:0007669"/>
    <property type="project" value="TreeGrafter"/>
</dbReference>
<dbReference type="GO" id="GO:0006364">
    <property type="term" value="P:rRNA processing"/>
    <property type="evidence" value="ECO:0007669"/>
    <property type="project" value="UniProtKB-UniRule"/>
</dbReference>
<dbReference type="GO" id="GO:0008033">
    <property type="term" value="P:tRNA processing"/>
    <property type="evidence" value="ECO:0007669"/>
    <property type="project" value="UniProtKB-KW"/>
</dbReference>
<dbReference type="CDD" id="cd10845">
    <property type="entry name" value="DSRM_RNAse_III_family"/>
    <property type="match status" value="1"/>
</dbReference>
<dbReference type="CDD" id="cd00593">
    <property type="entry name" value="RIBOc"/>
    <property type="match status" value="1"/>
</dbReference>
<dbReference type="FunFam" id="1.10.1520.10:FF:000001">
    <property type="entry name" value="Ribonuclease 3"/>
    <property type="match status" value="1"/>
</dbReference>
<dbReference type="FunFam" id="3.30.160.20:FF:000003">
    <property type="entry name" value="Ribonuclease 3"/>
    <property type="match status" value="1"/>
</dbReference>
<dbReference type="Gene3D" id="3.30.160.20">
    <property type="match status" value="1"/>
</dbReference>
<dbReference type="Gene3D" id="1.10.1520.10">
    <property type="entry name" value="Ribonuclease III domain"/>
    <property type="match status" value="1"/>
</dbReference>
<dbReference type="HAMAP" id="MF_00104">
    <property type="entry name" value="RNase_III"/>
    <property type="match status" value="1"/>
</dbReference>
<dbReference type="InterPro" id="IPR014720">
    <property type="entry name" value="dsRBD_dom"/>
</dbReference>
<dbReference type="InterPro" id="IPR011907">
    <property type="entry name" value="RNase_III"/>
</dbReference>
<dbReference type="InterPro" id="IPR000999">
    <property type="entry name" value="RNase_III_dom"/>
</dbReference>
<dbReference type="InterPro" id="IPR036389">
    <property type="entry name" value="RNase_III_sf"/>
</dbReference>
<dbReference type="NCBIfam" id="TIGR02191">
    <property type="entry name" value="RNaseIII"/>
    <property type="match status" value="1"/>
</dbReference>
<dbReference type="PANTHER" id="PTHR11207:SF0">
    <property type="entry name" value="RIBONUCLEASE 3"/>
    <property type="match status" value="1"/>
</dbReference>
<dbReference type="PANTHER" id="PTHR11207">
    <property type="entry name" value="RIBONUCLEASE III"/>
    <property type="match status" value="1"/>
</dbReference>
<dbReference type="Pfam" id="PF00035">
    <property type="entry name" value="dsrm"/>
    <property type="match status" value="1"/>
</dbReference>
<dbReference type="Pfam" id="PF14622">
    <property type="entry name" value="Ribonucleas_3_3"/>
    <property type="match status" value="1"/>
</dbReference>
<dbReference type="SMART" id="SM00358">
    <property type="entry name" value="DSRM"/>
    <property type="match status" value="1"/>
</dbReference>
<dbReference type="SMART" id="SM00535">
    <property type="entry name" value="RIBOc"/>
    <property type="match status" value="1"/>
</dbReference>
<dbReference type="SUPFAM" id="SSF54768">
    <property type="entry name" value="dsRNA-binding domain-like"/>
    <property type="match status" value="1"/>
</dbReference>
<dbReference type="SUPFAM" id="SSF69065">
    <property type="entry name" value="RNase III domain-like"/>
    <property type="match status" value="1"/>
</dbReference>
<dbReference type="PROSITE" id="PS50137">
    <property type="entry name" value="DS_RBD"/>
    <property type="match status" value="1"/>
</dbReference>
<dbReference type="PROSITE" id="PS00517">
    <property type="entry name" value="RNASE_3_1"/>
    <property type="match status" value="1"/>
</dbReference>
<dbReference type="PROSITE" id="PS50142">
    <property type="entry name" value="RNASE_3_2"/>
    <property type="match status" value="1"/>
</dbReference>
<name>RNC_EHRCR</name>
<accession>Q2GFE4</accession>
<organism>
    <name type="scientific">Ehrlichia chaffeensis (strain ATCC CRL-10679 / Arkansas)</name>
    <dbReference type="NCBI Taxonomy" id="205920"/>
    <lineage>
        <taxon>Bacteria</taxon>
        <taxon>Pseudomonadati</taxon>
        <taxon>Pseudomonadota</taxon>
        <taxon>Alphaproteobacteria</taxon>
        <taxon>Rickettsiales</taxon>
        <taxon>Anaplasmataceae</taxon>
        <taxon>Ehrlichia</taxon>
    </lineage>
</organism>
<reference key="1">
    <citation type="journal article" date="2006" name="PLoS Genet.">
        <title>Comparative genomics of emerging human ehrlichiosis agents.</title>
        <authorList>
            <person name="Dunning Hotopp J.C."/>
            <person name="Lin M."/>
            <person name="Madupu R."/>
            <person name="Crabtree J."/>
            <person name="Angiuoli S.V."/>
            <person name="Eisen J.A."/>
            <person name="Seshadri R."/>
            <person name="Ren Q."/>
            <person name="Wu M."/>
            <person name="Utterback T.R."/>
            <person name="Smith S."/>
            <person name="Lewis M."/>
            <person name="Khouri H."/>
            <person name="Zhang C."/>
            <person name="Niu H."/>
            <person name="Lin Q."/>
            <person name="Ohashi N."/>
            <person name="Zhi N."/>
            <person name="Nelson W.C."/>
            <person name="Brinkac L.M."/>
            <person name="Dodson R.J."/>
            <person name="Rosovitz M.J."/>
            <person name="Sundaram J.P."/>
            <person name="Daugherty S.C."/>
            <person name="Davidsen T."/>
            <person name="Durkin A.S."/>
            <person name="Gwinn M.L."/>
            <person name="Haft D.H."/>
            <person name="Selengut J.D."/>
            <person name="Sullivan S.A."/>
            <person name="Zafar N."/>
            <person name="Zhou L."/>
            <person name="Benahmed F."/>
            <person name="Forberger H."/>
            <person name="Halpin R."/>
            <person name="Mulligan S."/>
            <person name="Robinson J."/>
            <person name="White O."/>
            <person name="Rikihisa Y."/>
            <person name="Tettelin H."/>
        </authorList>
    </citation>
    <scope>NUCLEOTIDE SEQUENCE [LARGE SCALE GENOMIC DNA]</scope>
    <source>
        <strain>ATCC CRL-10679 / Arkansas</strain>
    </source>
</reference>
<comment type="function">
    <text evidence="1">Digests double-stranded RNA. Involved in the processing of primary rRNA transcript to yield the immediate precursors to the large and small rRNAs (23S and 16S). Processes some mRNAs, and tRNAs when they are encoded in the rRNA operon. Processes pre-crRNA and tracrRNA of type II CRISPR loci if present in the organism.</text>
</comment>
<comment type="catalytic activity">
    <reaction evidence="1">
        <text>Endonucleolytic cleavage to 5'-phosphomonoester.</text>
        <dbReference type="EC" id="3.1.26.3"/>
    </reaction>
</comment>
<comment type="cofactor">
    <cofactor evidence="1">
        <name>Mg(2+)</name>
        <dbReference type="ChEBI" id="CHEBI:18420"/>
    </cofactor>
</comment>
<comment type="subunit">
    <text evidence="1">Homodimer.</text>
</comment>
<comment type="subcellular location">
    <subcellularLocation>
        <location evidence="1">Cytoplasm</location>
    </subcellularLocation>
</comment>
<comment type="similarity">
    <text evidence="1">Belongs to the ribonuclease III family.</text>
</comment>
<proteinExistence type="inferred from homology"/>
<gene>
    <name evidence="1" type="primary">rnc</name>
    <name type="ordered locus">ECH_1054</name>
</gene>
<keyword id="KW-0963">Cytoplasm</keyword>
<keyword id="KW-0255">Endonuclease</keyword>
<keyword id="KW-0378">Hydrolase</keyword>
<keyword id="KW-0460">Magnesium</keyword>
<keyword id="KW-0479">Metal-binding</keyword>
<keyword id="KW-0507">mRNA processing</keyword>
<keyword id="KW-0540">Nuclease</keyword>
<keyword id="KW-1185">Reference proteome</keyword>
<keyword id="KW-0694">RNA-binding</keyword>
<keyword id="KW-0698">rRNA processing</keyword>
<keyword id="KW-0699">rRNA-binding</keyword>
<keyword id="KW-0819">tRNA processing</keyword>